<organism>
    <name type="scientific">Pelagibacter ubique (strain HTCC1062)</name>
    <dbReference type="NCBI Taxonomy" id="335992"/>
    <lineage>
        <taxon>Bacteria</taxon>
        <taxon>Pseudomonadati</taxon>
        <taxon>Pseudomonadota</taxon>
        <taxon>Alphaproteobacteria</taxon>
        <taxon>Candidatus Pelagibacterales</taxon>
        <taxon>Candidatus Pelagibacteraceae</taxon>
        <taxon>Candidatus Pelagibacter</taxon>
    </lineage>
</organism>
<protein>
    <recommendedName>
        <fullName evidence="1">4-hydroxy-tetrahydrodipicolinate reductase</fullName>
        <shortName evidence="1">HTPA reductase</shortName>
        <ecNumber evidence="1">1.17.1.8</ecNumber>
    </recommendedName>
</protein>
<evidence type="ECO:0000255" key="1">
    <source>
        <dbReference type="HAMAP-Rule" id="MF_00102"/>
    </source>
</evidence>
<evidence type="ECO:0000305" key="2"/>
<accession>Q4FNQ1</accession>
<reference key="1">
    <citation type="journal article" date="2005" name="Science">
        <title>Genome streamlining in a cosmopolitan oceanic bacterium.</title>
        <authorList>
            <person name="Giovannoni S.J."/>
            <person name="Tripp H.J."/>
            <person name="Givan S."/>
            <person name="Podar M."/>
            <person name="Vergin K.L."/>
            <person name="Baptista D."/>
            <person name="Bibbs L."/>
            <person name="Eads J."/>
            <person name="Richardson T.H."/>
            <person name="Noordewier M."/>
            <person name="Rappe M.S."/>
            <person name="Short J.M."/>
            <person name="Carrington J.C."/>
            <person name="Mathur E.J."/>
        </authorList>
    </citation>
    <scope>NUCLEOTIDE SEQUENCE [LARGE SCALE GENOMIC DNA]</scope>
    <source>
        <strain>HTCC1062</strain>
    </source>
</reference>
<sequence>MKKINLAISGCLGRMGQQLIKSSKNNKNFKLTALTENKAISKKIAGIKLDVNTEQTFKKTDVIIDFTVPNCTLDILKIASKLKKRVVIGTTGFNQKEEALIKKFSKTIPILKAGNMSLGVNLLMYLTEITSKSLNEEYLSKVFEVHHKHKKDYPSGTALMLGKGIADGKNKNLYNLMGKKFLNKKSFPYGKKINFNSIRKGEIIGEHEVTFSSGKEIIKLNHEAFDRALYSDGALTAAKWLINKKPGLYSMRDLLNFR</sequence>
<feature type="chain" id="PRO_0000228368" description="4-hydroxy-tetrahydrodipicolinate reductase">
    <location>
        <begin position="1"/>
        <end position="258"/>
    </location>
</feature>
<feature type="active site" description="Proton donor/acceptor" evidence="1">
    <location>
        <position position="146"/>
    </location>
</feature>
<feature type="active site" description="Proton donor" evidence="1">
    <location>
        <position position="150"/>
    </location>
</feature>
<feature type="binding site" evidence="1">
    <location>
        <begin position="10"/>
        <end position="15"/>
    </location>
    <ligand>
        <name>NAD(+)</name>
        <dbReference type="ChEBI" id="CHEBI:57540"/>
    </ligand>
</feature>
<feature type="binding site" evidence="1">
    <location>
        <position position="38"/>
    </location>
    <ligand>
        <name>NADP(+)</name>
        <dbReference type="ChEBI" id="CHEBI:58349"/>
    </ligand>
</feature>
<feature type="binding site" evidence="1">
    <location>
        <begin position="89"/>
        <end position="91"/>
    </location>
    <ligand>
        <name>NAD(+)</name>
        <dbReference type="ChEBI" id="CHEBI:57540"/>
    </ligand>
</feature>
<feature type="binding site" evidence="1">
    <location>
        <begin position="113"/>
        <end position="116"/>
    </location>
    <ligand>
        <name>NAD(+)</name>
        <dbReference type="ChEBI" id="CHEBI:57540"/>
    </ligand>
</feature>
<feature type="binding site" evidence="1">
    <location>
        <position position="147"/>
    </location>
    <ligand>
        <name>(S)-2,3,4,5-tetrahydrodipicolinate</name>
        <dbReference type="ChEBI" id="CHEBI:16845"/>
    </ligand>
</feature>
<feature type="binding site" evidence="1">
    <location>
        <begin position="156"/>
        <end position="157"/>
    </location>
    <ligand>
        <name>(S)-2,3,4,5-tetrahydrodipicolinate</name>
        <dbReference type="ChEBI" id="CHEBI:16845"/>
    </ligand>
</feature>
<dbReference type="EC" id="1.17.1.8" evidence="1"/>
<dbReference type="EMBL" id="CP000084">
    <property type="protein sequence ID" value="AAZ21188.1"/>
    <property type="molecule type" value="Genomic_DNA"/>
</dbReference>
<dbReference type="RefSeq" id="WP_011281656.1">
    <property type="nucleotide sequence ID" value="NC_007205.1"/>
</dbReference>
<dbReference type="SMR" id="Q4FNQ1"/>
<dbReference type="STRING" id="335992.SAR11_0366"/>
<dbReference type="GeneID" id="66294864"/>
<dbReference type="KEGG" id="pub:SAR11_0366"/>
<dbReference type="eggNOG" id="COG0289">
    <property type="taxonomic scope" value="Bacteria"/>
</dbReference>
<dbReference type="HOGENOM" id="CLU_047479_2_1_5"/>
<dbReference type="OrthoDB" id="9790352at2"/>
<dbReference type="UniPathway" id="UPA00034">
    <property type="reaction ID" value="UER00018"/>
</dbReference>
<dbReference type="Proteomes" id="UP000002528">
    <property type="component" value="Chromosome"/>
</dbReference>
<dbReference type="GO" id="GO:0005737">
    <property type="term" value="C:cytoplasm"/>
    <property type="evidence" value="ECO:0007669"/>
    <property type="project" value="UniProtKB-SubCell"/>
</dbReference>
<dbReference type="GO" id="GO:0008839">
    <property type="term" value="F:4-hydroxy-tetrahydrodipicolinate reductase"/>
    <property type="evidence" value="ECO:0007669"/>
    <property type="project" value="UniProtKB-EC"/>
</dbReference>
<dbReference type="GO" id="GO:0051287">
    <property type="term" value="F:NAD binding"/>
    <property type="evidence" value="ECO:0007669"/>
    <property type="project" value="UniProtKB-UniRule"/>
</dbReference>
<dbReference type="GO" id="GO:0050661">
    <property type="term" value="F:NADP binding"/>
    <property type="evidence" value="ECO:0007669"/>
    <property type="project" value="UniProtKB-UniRule"/>
</dbReference>
<dbReference type="GO" id="GO:0016726">
    <property type="term" value="F:oxidoreductase activity, acting on CH or CH2 groups, NAD or NADP as acceptor"/>
    <property type="evidence" value="ECO:0007669"/>
    <property type="project" value="UniProtKB-UniRule"/>
</dbReference>
<dbReference type="GO" id="GO:0019877">
    <property type="term" value="P:diaminopimelate biosynthetic process"/>
    <property type="evidence" value="ECO:0007669"/>
    <property type="project" value="UniProtKB-UniRule"/>
</dbReference>
<dbReference type="GO" id="GO:0009089">
    <property type="term" value="P:lysine biosynthetic process via diaminopimelate"/>
    <property type="evidence" value="ECO:0007669"/>
    <property type="project" value="UniProtKB-UniRule"/>
</dbReference>
<dbReference type="CDD" id="cd02274">
    <property type="entry name" value="DHDPR_N"/>
    <property type="match status" value="1"/>
</dbReference>
<dbReference type="Gene3D" id="3.30.360.10">
    <property type="entry name" value="Dihydrodipicolinate Reductase, domain 2"/>
    <property type="match status" value="1"/>
</dbReference>
<dbReference type="Gene3D" id="3.40.50.720">
    <property type="entry name" value="NAD(P)-binding Rossmann-like Domain"/>
    <property type="match status" value="1"/>
</dbReference>
<dbReference type="HAMAP" id="MF_00102">
    <property type="entry name" value="DapB"/>
    <property type="match status" value="1"/>
</dbReference>
<dbReference type="InterPro" id="IPR022663">
    <property type="entry name" value="DapB_C"/>
</dbReference>
<dbReference type="InterPro" id="IPR000846">
    <property type="entry name" value="DapB_N"/>
</dbReference>
<dbReference type="InterPro" id="IPR023940">
    <property type="entry name" value="DHDPR_bac"/>
</dbReference>
<dbReference type="InterPro" id="IPR036291">
    <property type="entry name" value="NAD(P)-bd_dom_sf"/>
</dbReference>
<dbReference type="NCBIfam" id="TIGR00036">
    <property type="entry name" value="dapB"/>
    <property type="match status" value="1"/>
</dbReference>
<dbReference type="PANTHER" id="PTHR20836:SF0">
    <property type="entry name" value="4-HYDROXY-TETRAHYDRODIPICOLINATE REDUCTASE 1, CHLOROPLASTIC-RELATED"/>
    <property type="match status" value="1"/>
</dbReference>
<dbReference type="PANTHER" id="PTHR20836">
    <property type="entry name" value="DIHYDRODIPICOLINATE REDUCTASE"/>
    <property type="match status" value="1"/>
</dbReference>
<dbReference type="Pfam" id="PF05173">
    <property type="entry name" value="DapB_C"/>
    <property type="match status" value="1"/>
</dbReference>
<dbReference type="Pfam" id="PF01113">
    <property type="entry name" value="DapB_N"/>
    <property type="match status" value="1"/>
</dbReference>
<dbReference type="PIRSF" id="PIRSF000161">
    <property type="entry name" value="DHPR"/>
    <property type="match status" value="1"/>
</dbReference>
<dbReference type="SUPFAM" id="SSF55347">
    <property type="entry name" value="Glyceraldehyde-3-phosphate dehydrogenase-like, C-terminal domain"/>
    <property type="match status" value="1"/>
</dbReference>
<dbReference type="SUPFAM" id="SSF51735">
    <property type="entry name" value="NAD(P)-binding Rossmann-fold domains"/>
    <property type="match status" value="1"/>
</dbReference>
<proteinExistence type="inferred from homology"/>
<gene>
    <name evidence="1" type="primary">dapB</name>
    <name type="ordered locus">SAR11_0366</name>
</gene>
<name>DAPB_PELUB</name>
<comment type="function">
    <text evidence="1">Catalyzes the conversion of 4-hydroxy-tetrahydrodipicolinate (HTPA) to tetrahydrodipicolinate.</text>
</comment>
<comment type="catalytic activity">
    <reaction evidence="1">
        <text>(S)-2,3,4,5-tetrahydrodipicolinate + NAD(+) + H2O = (2S,4S)-4-hydroxy-2,3,4,5-tetrahydrodipicolinate + NADH + H(+)</text>
        <dbReference type="Rhea" id="RHEA:35323"/>
        <dbReference type="ChEBI" id="CHEBI:15377"/>
        <dbReference type="ChEBI" id="CHEBI:15378"/>
        <dbReference type="ChEBI" id="CHEBI:16845"/>
        <dbReference type="ChEBI" id="CHEBI:57540"/>
        <dbReference type="ChEBI" id="CHEBI:57945"/>
        <dbReference type="ChEBI" id="CHEBI:67139"/>
        <dbReference type="EC" id="1.17.1.8"/>
    </reaction>
</comment>
<comment type="catalytic activity">
    <reaction evidence="1">
        <text>(S)-2,3,4,5-tetrahydrodipicolinate + NADP(+) + H2O = (2S,4S)-4-hydroxy-2,3,4,5-tetrahydrodipicolinate + NADPH + H(+)</text>
        <dbReference type="Rhea" id="RHEA:35331"/>
        <dbReference type="ChEBI" id="CHEBI:15377"/>
        <dbReference type="ChEBI" id="CHEBI:15378"/>
        <dbReference type="ChEBI" id="CHEBI:16845"/>
        <dbReference type="ChEBI" id="CHEBI:57783"/>
        <dbReference type="ChEBI" id="CHEBI:58349"/>
        <dbReference type="ChEBI" id="CHEBI:67139"/>
        <dbReference type="EC" id="1.17.1.8"/>
    </reaction>
</comment>
<comment type="pathway">
    <text evidence="1">Amino-acid biosynthesis; L-lysine biosynthesis via DAP pathway; (S)-tetrahydrodipicolinate from L-aspartate: step 4/4.</text>
</comment>
<comment type="subcellular location">
    <subcellularLocation>
        <location evidence="1">Cytoplasm</location>
    </subcellularLocation>
</comment>
<comment type="similarity">
    <text evidence="1">Belongs to the DapB family.</text>
</comment>
<comment type="caution">
    <text evidence="2">Was originally thought to be a dihydrodipicolinate reductase (DHDPR), catalyzing the conversion of dihydrodipicolinate to tetrahydrodipicolinate. However, it was shown in E.coli that the substrate of the enzymatic reaction is not dihydrodipicolinate (DHDP) but in fact (2S,4S)-4-hydroxy-2,3,4,5-tetrahydrodipicolinic acid (HTPA), the product released by the DapA-catalyzed reaction.</text>
</comment>
<keyword id="KW-0028">Amino-acid biosynthesis</keyword>
<keyword id="KW-0963">Cytoplasm</keyword>
<keyword id="KW-0220">Diaminopimelate biosynthesis</keyword>
<keyword id="KW-0457">Lysine biosynthesis</keyword>
<keyword id="KW-0520">NAD</keyword>
<keyword id="KW-0521">NADP</keyword>
<keyword id="KW-0560">Oxidoreductase</keyword>
<keyword id="KW-1185">Reference proteome</keyword>